<evidence type="ECO:0000255" key="1">
    <source>
        <dbReference type="HAMAP-Rule" id="MF_00145"/>
    </source>
</evidence>
<name>PGK_LACAC</name>
<dbReference type="EC" id="2.7.2.3" evidence="1"/>
<dbReference type="EMBL" id="CP000033">
    <property type="protein sequence ID" value="AAV42574.1"/>
    <property type="molecule type" value="Genomic_DNA"/>
</dbReference>
<dbReference type="RefSeq" id="WP_003546602.1">
    <property type="nucleotide sequence ID" value="NC_006814.3"/>
</dbReference>
<dbReference type="RefSeq" id="YP_193605.1">
    <property type="nucleotide sequence ID" value="NC_006814.3"/>
</dbReference>
<dbReference type="SMR" id="Q5FL50"/>
<dbReference type="STRING" id="272621.LBA0699"/>
<dbReference type="KEGG" id="lac:LBA0699"/>
<dbReference type="PATRIC" id="fig|272621.13.peg.669"/>
<dbReference type="eggNOG" id="COG0126">
    <property type="taxonomic scope" value="Bacteria"/>
</dbReference>
<dbReference type="HOGENOM" id="CLU_025427_0_2_9"/>
<dbReference type="OrthoDB" id="9808460at2"/>
<dbReference type="BioCyc" id="LACI272621:G1G49-721-MONOMER"/>
<dbReference type="UniPathway" id="UPA00109">
    <property type="reaction ID" value="UER00185"/>
</dbReference>
<dbReference type="Proteomes" id="UP000006381">
    <property type="component" value="Chromosome"/>
</dbReference>
<dbReference type="GO" id="GO:0005829">
    <property type="term" value="C:cytosol"/>
    <property type="evidence" value="ECO:0007669"/>
    <property type="project" value="TreeGrafter"/>
</dbReference>
<dbReference type="GO" id="GO:0043531">
    <property type="term" value="F:ADP binding"/>
    <property type="evidence" value="ECO:0007669"/>
    <property type="project" value="TreeGrafter"/>
</dbReference>
<dbReference type="GO" id="GO:0005524">
    <property type="term" value="F:ATP binding"/>
    <property type="evidence" value="ECO:0007669"/>
    <property type="project" value="UniProtKB-KW"/>
</dbReference>
<dbReference type="GO" id="GO:0004618">
    <property type="term" value="F:phosphoglycerate kinase activity"/>
    <property type="evidence" value="ECO:0007669"/>
    <property type="project" value="UniProtKB-UniRule"/>
</dbReference>
<dbReference type="GO" id="GO:0006094">
    <property type="term" value="P:gluconeogenesis"/>
    <property type="evidence" value="ECO:0007669"/>
    <property type="project" value="TreeGrafter"/>
</dbReference>
<dbReference type="GO" id="GO:0006096">
    <property type="term" value="P:glycolytic process"/>
    <property type="evidence" value="ECO:0007669"/>
    <property type="project" value="UniProtKB-UniRule"/>
</dbReference>
<dbReference type="CDD" id="cd00318">
    <property type="entry name" value="Phosphoglycerate_kinase"/>
    <property type="match status" value="1"/>
</dbReference>
<dbReference type="FunFam" id="3.40.50.1260:FF:000001">
    <property type="entry name" value="Phosphoglycerate kinase"/>
    <property type="match status" value="1"/>
</dbReference>
<dbReference type="FunFam" id="3.40.50.1260:FF:000008">
    <property type="entry name" value="Phosphoglycerate kinase"/>
    <property type="match status" value="1"/>
</dbReference>
<dbReference type="Gene3D" id="3.40.50.1260">
    <property type="entry name" value="Phosphoglycerate kinase, N-terminal domain"/>
    <property type="match status" value="2"/>
</dbReference>
<dbReference type="HAMAP" id="MF_00145">
    <property type="entry name" value="Phosphoglyc_kinase"/>
    <property type="match status" value="1"/>
</dbReference>
<dbReference type="InterPro" id="IPR001576">
    <property type="entry name" value="Phosphoglycerate_kinase"/>
</dbReference>
<dbReference type="InterPro" id="IPR015911">
    <property type="entry name" value="Phosphoglycerate_kinase_CS"/>
</dbReference>
<dbReference type="InterPro" id="IPR015824">
    <property type="entry name" value="Phosphoglycerate_kinase_N"/>
</dbReference>
<dbReference type="InterPro" id="IPR036043">
    <property type="entry name" value="Phosphoglycerate_kinase_sf"/>
</dbReference>
<dbReference type="PANTHER" id="PTHR11406">
    <property type="entry name" value="PHOSPHOGLYCERATE KINASE"/>
    <property type="match status" value="1"/>
</dbReference>
<dbReference type="PANTHER" id="PTHR11406:SF23">
    <property type="entry name" value="PHOSPHOGLYCERATE KINASE 1, CHLOROPLASTIC-RELATED"/>
    <property type="match status" value="1"/>
</dbReference>
<dbReference type="Pfam" id="PF00162">
    <property type="entry name" value="PGK"/>
    <property type="match status" value="1"/>
</dbReference>
<dbReference type="PIRSF" id="PIRSF000724">
    <property type="entry name" value="Pgk"/>
    <property type="match status" value="1"/>
</dbReference>
<dbReference type="PRINTS" id="PR00477">
    <property type="entry name" value="PHGLYCKINASE"/>
</dbReference>
<dbReference type="SUPFAM" id="SSF53748">
    <property type="entry name" value="Phosphoglycerate kinase"/>
    <property type="match status" value="1"/>
</dbReference>
<dbReference type="PROSITE" id="PS00111">
    <property type="entry name" value="PGLYCERATE_KINASE"/>
    <property type="match status" value="1"/>
</dbReference>
<feature type="chain" id="PRO_1000009617" description="Phosphoglycerate kinase">
    <location>
        <begin position="1"/>
        <end position="403"/>
    </location>
</feature>
<feature type="binding site" evidence="1">
    <location>
        <begin position="21"/>
        <end position="23"/>
    </location>
    <ligand>
        <name>substrate</name>
    </ligand>
</feature>
<feature type="binding site" evidence="1">
    <location>
        <position position="36"/>
    </location>
    <ligand>
        <name>substrate</name>
    </ligand>
</feature>
<feature type="binding site" evidence="1">
    <location>
        <begin position="59"/>
        <end position="62"/>
    </location>
    <ligand>
        <name>substrate</name>
    </ligand>
</feature>
<feature type="binding site" evidence="1">
    <location>
        <position position="119"/>
    </location>
    <ligand>
        <name>substrate</name>
    </ligand>
</feature>
<feature type="binding site" evidence="1">
    <location>
        <position position="159"/>
    </location>
    <ligand>
        <name>substrate</name>
    </ligand>
</feature>
<feature type="binding site" evidence="1">
    <location>
        <position position="214"/>
    </location>
    <ligand>
        <name>ATP</name>
        <dbReference type="ChEBI" id="CHEBI:30616"/>
    </ligand>
</feature>
<feature type="binding site" evidence="1">
    <location>
        <position position="301"/>
    </location>
    <ligand>
        <name>ATP</name>
        <dbReference type="ChEBI" id="CHEBI:30616"/>
    </ligand>
</feature>
<feature type="binding site" evidence="1">
    <location>
        <position position="332"/>
    </location>
    <ligand>
        <name>ATP</name>
        <dbReference type="ChEBI" id="CHEBI:30616"/>
    </ligand>
</feature>
<feature type="binding site" evidence="1">
    <location>
        <begin position="359"/>
        <end position="362"/>
    </location>
    <ligand>
        <name>ATP</name>
        <dbReference type="ChEBI" id="CHEBI:30616"/>
    </ligand>
</feature>
<organism>
    <name type="scientific">Lactobacillus acidophilus (strain ATCC 700396 / NCK56 / N2 / NCFM)</name>
    <dbReference type="NCBI Taxonomy" id="272621"/>
    <lineage>
        <taxon>Bacteria</taxon>
        <taxon>Bacillati</taxon>
        <taxon>Bacillota</taxon>
        <taxon>Bacilli</taxon>
        <taxon>Lactobacillales</taxon>
        <taxon>Lactobacillaceae</taxon>
        <taxon>Lactobacillus</taxon>
    </lineage>
</organism>
<sequence>MAKLIISDLDVKGKKVLVRVDFNVPIKDGVIGDDNRIVAALPTIKYIIEHGGKAILLSHLGRVKSDADKKELSLKPVAERLSELLDKPVTFVPSNEGKEVEEAIDNMKDGDVVVLENTRFQDIDNDFGKRESGNDPKLGEYWASLGDIFVNDAFGTAHRSHASNVGIATAMKENGKPAAAGYLLEKEIKYLGDAVDNPVHPFVTILGGAKVSDKIGVIENLIPKSDHILIGGGMAYTFLAAQGHKIGKSLFEADKVDLAKELLEKAGDKIVLPVDNVAATEFSNDASREVVGDDIPDNMMGLDIGPKTIAKFKDILKDAKTVVWNGPMGAFEMPNFAEGTLEVGRALANLTDATTIIGGGDSTAAAKQLGIAPKISHISTGGGASLNYLEGKVLPGIACVSDK</sequence>
<proteinExistence type="inferred from homology"/>
<comment type="catalytic activity">
    <reaction evidence="1">
        <text>(2R)-3-phosphoglycerate + ATP = (2R)-3-phospho-glyceroyl phosphate + ADP</text>
        <dbReference type="Rhea" id="RHEA:14801"/>
        <dbReference type="ChEBI" id="CHEBI:30616"/>
        <dbReference type="ChEBI" id="CHEBI:57604"/>
        <dbReference type="ChEBI" id="CHEBI:58272"/>
        <dbReference type="ChEBI" id="CHEBI:456216"/>
        <dbReference type="EC" id="2.7.2.3"/>
    </reaction>
</comment>
<comment type="pathway">
    <text evidence="1">Carbohydrate degradation; glycolysis; pyruvate from D-glyceraldehyde 3-phosphate: step 2/5.</text>
</comment>
<comment type="subunit">
    <text evidence="1">Monomer.</text>
</comment>
<comment type="subcellular location">
    <subcellularLocation>
        <location evidence="1">Cytoplasm</location>
    </subcellularLocation>
</comment>
<comment type="similarity">
    <text evidence="1">Belongs to the phosphoglycerate kinase family.</text>
</comment>
<reference key="1">
    <citation type="journal article" date="2005" name="Proc. Natl. Acad. Sci. U.S.A.">
        <title>Complete genome sequence of the probiotic lactic acid bacterium Lactobacillus acidophilus NCFM.</title>
        <authorList>
            <person name="Altermann E."/>
            <person name="Russell W.M."/>
            <person name="Azcarate-Peril M.A."/>
            <person name="Barrangou R."/>
            <person name="Buck B.L."/>
            <person name="McAuliffe O."/>
            <person name="Souther N."/>
            <person name="Dobson A."/>
            <person name="Duong T."/>
            <person name="Callanan M."/>
            <person name="Lick S."/>
            <person name="Hamrick A."/>
            <person name="Cano R."/>
            <person name="Klaenhammer T.R."/>
        </authorList>
    </citation>
    <scope>NUCLEOTIDE SEQUENCE [LARGE SCALE GENOMIC DNA]</scope>
    <source>
        <strain>ATCC 700396 / NCK56 / N2 / NCFM</strain>
    </source>
</reference>
<protein>
    <recommendedName>
        <fullName evidence="1">Phosphoglycerate kinase</fullName>
        <ecNumber evidence="1">2.7.2.3</ecNumber>
    </recommendedName>
</protein>
<accession>Q5FL50</accession>
<gene>
    <name evidence="1" type="primary">pgk</name>
    <name type="ordered locus">LBA0699</name>
</gene>
<keyword id="KW-0067">ATP-binding</keyword>
<keyword id="KW-0963">Cytoplasm</keyword>
<keyword id="KW-0324">Glycolysis</keyword>
<keyword id="KW-0418">Kinase</keyword>
<keyword id="KW-0547">Nucleotide-binding</keyword>
<keyword id="KW-1185">Reference proteome</keyword>
<keyword id="KW-0808">Transferase</keyword>